<keyword id="KW-0456">Lyase</keyword>
<keyword id="KW-0460">Magnesium</keyword>
<keyword id="KW-0464">Manganese</keyword>
<keyword id="KW-0479">Metal-binding</keyword>
<keyword id="KW-1185">Reference proteome</keyword>
<keyword id="KW-0686">Riboflavin biosynthesis</keyword>
<gene>
    <name evidence="1" type="primary">ribB</name>
    <name type="ordered locus">BU059</name>
</gene>
<feature type="chain" id="PRO_0000151791" description="3,4-dihydroxy-2-butanone 4-phosphate synthase">
    <location>
        <begin position="1"/>
        <end position="215"/>
    </location>
</feature>
<feature type="binding site" evidence="1">
    <location>
        <begin position="37"/>
        <end position="38"/>
    </location>
    <ligand>
        <name>D-ribulose 5-phosphate</name>
        <dbReference type="ChEBI" id="CHEBI:58121"/>
    </ligand>
</feature>
<feature type="binding site" evidence="1">
    <location>
        <position position="38"/>
    </location>
    <ligand>
        <name>Mg(2+)</name>
        <dbReference type="ChEBI" id="CHEBI:18420"/>
        <label>1</label>
    </ligand>
</feature>
<feature type="binding site" evidence="1">
    <location>
        <position position="38"/>
    </location>
    <ligand>
        <name>Mg(2+)</name>
        <dbReference type="ChEBI" id="CHEBI:18420"/>
        <label>2</label>
    </ligand>
</feature>
<feature type="binding site" evidence="1">
    <location>
        <position position="42"/>
    </location>
    <ligand>
        <name>D-ribulose 5-phosphate</name>
        <dbReference type="ChEBI" id="CHEBI:58121"/>
    </ligand>
</feature>
<feature type="binding site" evidence="1">
    <location>
        <begin position="150"/>
        <end position="154"/>
    </location>
    <ligand>
        <name>D-ribulose 5-phosphate</name>
        <dbReference type="ChEBI" id="CHEBI:58121"/>
    </ligand>
</feature>
<feature type="binding site" evidence="1">
    <location>
        <position position="153"/>
    </location>
    <ligand>
        <name>Mg(2+)</name>
        <dbReference type="ChEBI" id="CHEBI:18420"/>
        <label>2</label>
    </ligand>
</feature>
<feature type="binding site" evidence="1">
    <location>
        <position position="174"/>
    </location>
    <ligand>
        <name>D-ribulose 5-phosphate</name>
        <dbReference type="ChEBI" id="CHEBI:58121"/>
    </ligand>
</feature>
<feature type="site" description="Essential for catalytic activity" evidence="1">
    <location>
        <position position="136"/>
    </location>
</feature>
<feature type="site" description="Essential for catalytic activity" evidence="1">
    <location>
        <position position="174"/>
    </location>
</feature>
<comment type="function">
    <text evidence="1">Catalyzes the conversion of D-ribulose 5-phosphate to formate and 3,4-dihydroxy-2-butanone 4-phosphate.</text>
</comment>
<comment type="catalytic activity">
    <reaction evidence="1">
        <text>D-ribulose 5-phosphate = (2S)-2-hydroxy-3-oxobutyl phosphate + formate + H(+)</text>
        <dbReference type="Rhea" id="RHEA:18457"/>
        <dbReference type="ChEBI" id="CHEBI:15378"/>
        <dbReference type="ChEBI" id="CHEBI:15740"/>
        <dbReference type="ChEBI" id="CHEBI:58121"/>
        <dbReference type="ChEBI" id="CHEBI:58830"/>
        <dbReference type="EC" id="4.1.99.12"/>
    </reaction>
</comment>
<comment type="cofactor">
    <cofactor evidence="1">
        <name>Mg(2+)</name>
        <dbReference type="ChEBI" id="CHEBI:18420"/>
    </cofactor>
    <cofactor evidence="1">
        <name>Mn(2+)</name>
        <dbReference type="ChEBI" id="CHEBI:29035"/>
    </cofactor>
    <text evidence="1">Binds 2 divalent metal cations per subunit. Magnesium or manganese.</text>
</comment>
<comment type="pathway">
    <text evidence="1">Cofactor biosynthesis; riboflavin biosynthesis; 2-hydroxy-3-oxobutyl phosphate from D-ribulose 5-phosphate: step 1/1.</text>
</comment>
<comment type="subunit">
    <text evidence="1">Homodimer.</text>
</comment>
<comment type="similarity">
    <text evidence="1">Belongs to the DHBP synthase family.</text>
</comment>
<protein>
    <recommendedName>
        <fullName evidence="1">3,4-dihydroxy-2-butanone 4-phosphate synthase</fullName>
        <shortName evidence="1">DHBP synthase</shortName>
        <ecNumber evidence="1">4.1.99.12</ecNumber>
    </recommendedName>
</protein>
<organism>
    <name type="scientific">Buchnera aphidicola subsp. Acyrthosiphon pisum (strain APS)</name>
    <name type="common">Acyrthosiphon pisum symbiotic bacterium</name>
    <dbReference type="NCBI Taxonomy" id="107806"/>
    <lineage>
        <taxon>Bacteria</taxon>
        <taxon>Pseudomonadati</taxon>
        <taxon>Pseudomonadota</taxon>
        <taxon>Gammaproteobacteria</taxon>
        <taxon>Enterobacterales</taxon>
        <taxon>Erwiniaceae</taxon>
        <taxon>Buchnera</taxon>
    </lineage>
</organism>
<name>RIBB_BUCAI</name>
<reference key="1">
    <citation type="journal article" date="2000" name="Nature">
        <title>Genome sequence of the endocellular bacterial symbiont of aphids Buchnera sp. APS.</title>
        <authorList>
            <person name="Shigenobu S."/>
            <person name="Watanabe H."/>
            <person name="Hattori M."/>
            <person name="Sakaki Y."/>
            <person name="Ishikawa H."/>
        </authorList>
    </citation>
    <scope>NUCLEOTIDE SEQUENCE [LARGE SCALE GENOMIC DNA]</scope>
    <source>
        <strain>APS</strain>
    </source>
</reference>
<proteinExistence type="inferred from homology"/>
<sequence>MNQTLLSKFGKPIERIKNAILALKSGQGVIILDDEERENEGDLVFACENMTVEQMALSIRYGSGIVCLCITESKRKQLNLPMMVKKNTSAYRTGFTVTIEASKGISTGVSAKDRLTTIKTAIADDAKPSDLNRPGHVFPLRAHKGGVLSRPGHTEAAIEIVSLAGFKPAGVICELTNKDGTMARTPEIIKFSENKKMQVLTIQDLIFYIKNINHL</sequence>
<accession>P57167</accession>
<dbReference type="EC" id="4.1.99.12" evidence="1"/>
<dbReference type="EMBL" id="BA000003">
    <property type="protein sequence ID" value="BAB12782.1"/>
    <property type="molecule type" value="Genomic_DNA"/>
</dbReference>
<dbReference type="RefSeq" id="NP_239896.1">
    <property type="nucleotide sequence ID" value="NC_002528.1"/>
</dbReference>
<dbReference type="RefSeq" id="WP_009874016.1">
    <property type="nucleotide sequence ID" value="NZ_AP036055.1"/>
</dbReference>
<dbReference type="SMR" id="P57167"/>
<dbReference type="STRING" id="563178.BUAP5A_058"/>
<dbReference type="EnsemblBacteria" id="BAB12782">
    <property type="protein sequence ID" value="BAB12782"/>
    <property type="gene ID" value="BAB12782"/>
</dbReference>
<dbReference type="KEGG" id="buc:BU059"/>
<dbReference type="PATRIC" id="fig|107806.10.peg.68"/>
<dbReference type="eggNOG" id="COG0108">
    <property type="taxonomic scope" value="Bacteria"/>
</dbReference>
<dbReference type="HOGENOM" id="CLU_020273_3_0_6"/>
<dbReference type="UniPathway" id="UPA00275">
    <property type="reaction ID" value="UER00399"/>
</dbReference>
<dbReference type="Proteomes" id="UP000001806">
    <property type="component" value="Chromosome"/>
</dbReference>
<dbReference type="GO" id="GO:0005829">
    <property type="term" value="C:cytosol"/>
    <property type="evidence" value="ECO:0007669"/>
    <property type="project" value="TreeGrafter"/>
</dbReference>
<dbReference type="GO" id="GO:0008686">
    <property type="term" value="F:3,4-dihydroxy-2-butanone-4-phosphate synthase activity"/>
    <property type="evidence" value="ECO:0007669"/>
    <property type="project" value="UniProtKB-UniRule"/>
</dbReference>
<dbReference type="GO" id="GO:0000287">
    <property type="term" value="F:magnesium ion binding"/>
    <property type="evidence" value="ECO:0007669"/>
    <property type="project" value="UniProtKB-UniRule"/>
</dbReference>
<dbReference type="GO" id="GO:0030145">
    <property type="term" value="F:manganese ion binding"/>
    <property type="evidence" value="ECO:0007669"/>
    <property type="project" value="UniProtKB-UniRule"/>
</dbReference>
<dbReference type="GO" id="GO:0009231">
    <property type="term" value="P:riboflavin biosynthetic process"/>
    <property type="evidence" value="ECO:0007669"/>
    <property type="project" value="UniProtKB-UniRule"/>
</dbReference>
<dbReference type="FunFam" id="3.90.870.10:FF:000002">
    <property type="entry name" value="3,4-dihydroxy-2-butanone 4-phosphate synthase"/>
    <property type="match status" value="1"/>
</dbReference>
<dbReference type="Gene3D" id="3.90.870.10">
    <property type="entry name" value="DHBP synthase"/>
    <property type="match status" value="1"/>
</dbReference>
<dbReference type="HAMAP" id="MF_00180">
    <property type="entry name" value="RibB"/>
    <property type="match status" value="1"/>
</dbReference>
<dbReference type="InterPro" id="IPR017945">
    <property type="entry name" value="DHBP_synth_RibB-like_a/b_dom"/>
</dbReference>
<dbReference type="InterPro" id="IPR000422">
    <property type="entry name" value="DHBP_synthase_RibB"/>
</dbReference>
<dbReference type="NCBIfam" id="TIGR00506">
    <property type="entry name" value="ribB"/>
    <property type="match status" value="1"/>
</dbReference>
<dbReference type="PANTHER" id="PTHR21327:SF38">
    <property type="entry name" value="3,4-DIHYDROXY-2-BUTANONE 4-PHOSPHATE SYNTHASE"/>
    <property type="match status" value="1"/>
</dbReference>
<dbReference type="PANTHER" id="PTHR21327">
    <property type="entry name" value="GTP CYCLOHYDROLASE II-RELATED"/>
    <property type="match status" value="1"/>
</dbReference>
<dbReference type="Pfam" id="PF00926">
    <property type="entry name" value="DHBP_synthase"/>
    <property type="match status" value="1"/>
</dbReference>
<dbReference type="SUPFAM" id="SSF55821">
    <property type="entry name" value="YrdC/RibB"/>
    <property type="match status" value="1"/>
</dbReference>
<evidence type="ECO:0000255" key="1">
    <source>
        <dbReference type="HAMAP-Rule" id="MF_00180"/>
    </source>
</evidence>